<comment type="function">
    <text evidence="2">Component of the cytochrome c oxidase, the last enzyme in the mitochondrial electron transport chain which drives oxidative phosphorylation. The respiratory chain contains 3 multisubunit complexes succinate dehydrogenase (complex II, CII), ubiquinol-cytochrome c oxidoreductase (cytochrome b-c1 complex, complex III, CIII) and cytochrome c oxidase (complex IV, CIV), that cooperate to transfer electrons derived from NADH and succinate to molecular oxygen, creating an electrochemical gradient over the inner membrane that drives transmembrane transport and the ATP synthase. Cytochrome c oxidase is the component of the respiratory chain that catalyzes the reduction of oxygen to water. Electrons originating from reduced cytochrome c in the intermembrane space (IMS) are transferred via the dinuclear copper A center (CU(A)) of subunit 2 and heme A of subunit 1 to the active site in subunit 1, a binuclear center (BNC) formed by heme A3 and copper B (CU(B)). The BNC reduces molecular oxygen to 2 water molecules using 4 electrons from cytochrome c in the IMS and 4 protons from the mitochondrial matrix.</text>
</comment>
<comment type="pathway">
    <text evidence="2">Energy metabolism; oxidative phosphorylation.</text>
</comment>
<comment type="subunit">
    <text evidence="1 4">Component of the cytochrome c oxidase (complex IV, CIV), a multisubunit enzyme composed of 14 subunits. The complex is composed of a catalytic core of 3 subunits MT-CO1, MT-CO2 and MT-CO3, encoded in the mitochondrial DNA, and 11 supernumerary subunits COX4I, COX5A, COX5B, COX6A, COX6B, COX6C, COX7A, COX7B, COX7C, COX8 and NDUFA4, which are encoded in the nuclear genome. The complex exists as a monomer or a dimer and forms supercomplexes (SCs) in the inner mitochondrial membrane with NADH-ubiquinone oxidoreductase (complex I, CI) and ubiquinol-cytochrome c oxidoreductase (cytochrome b-c1 complex, complex III, CIII), resulting in different assemblies (supercomplex SCI(1)III(2)IV(1) and megacomplex MCI(2)III(2)IV(2)) (By similarity). Interacts with AFG1L (By similarity). Interacts with RAB5IF (By similarity).</text>
</comment>
<comment type="subcellular location">
    <subcellularLocation>
        <location evidence="1">Mitochondrion inner membrane</location>
        <topology evidence="1">Peripheral membrane protein</topology>
        <orientation evidence="1">Matrix side</orientation>
    </subcellularLocation>
</comment>
<comment type="PTM">
    <text evidence="4">In response to mitochondrial stress, the precursor protein is ubiquitinated by the SIFI complex in the cytoplasm before mitochondrial import, leading to its degradation. Within the SIFI complex, UBR4 initiates ubiquitin chain that are further elongated or branched by KCMF1.</text>
</comment>
<comment type="similarity">
    <text evidence="5">Belongs to the cytochrome c oxidase subunit 5A family.</text>
</comment>
<gene>
    <name type="primary">COX5A</name>
</gene>
<accession>B0VYX1</accession>
<feature type="transit peptide" description="Mitochondrion" evidence="1">
    <location>
        <begin position="1"/>
        <end position="41"/>
    </location>
</feature>
<feature type="chain" id="PRO_0000355987" description="Cytochrome c oxidase subunit 5A, mitochondrial">
    <location>
        <begin position="42"/>
        <end position="150"/>
    </location>
</feature>
<feature type="short sequence motif" description="SIFI-degron" evidence="4">
    <location>
        <begin position="2"/>
        <end position="17"/>
    </location>
</feature>
<feature type="modified residue" description="N6-acetyllysine" evidence="3">
    <location>
        <position position="87"/>
    </location>
</feature>
<feature type="modified residue" description="N6-acetyllysine" evidence="3">
    <location>
        <position position="113"/>
    </location>
</feature>
<feature type="modified residue" description="Phosphothreonine" evidence="4">
    <location>
        <position position="141"/>
    </location>
</feature>
<keyword id="KW-0007">Acetylation</keyword>
<keyword id="KW-0349">Heme</keyword>
<keyword id="KW-0408">Iron</keyword>
<keyword id="KW-0472">Membrane</keyword>
<keyword id="KW-0479">Metal-binding</keyword>
<keyword id="KW-0496">Mitochondrion</keyword>
<keyword id="KW-0999">Mitochondrion inner membrane</keyword>
<keyword id="KW-0597">Phosphoprotein</keyword>
<keyword id="KW-1185">Reference proteome</keyword>
<keyword id="KW-0809">Transit peptide</keyword>
<keyword id="KW-0832">Ubl conjugation</keyword>
<protein>
    <recommendedName>
        <fullName>Cytochrome c oxidase subunit 5A, mitochondrial</fullName>
    </recommendedName>
    <alternativeName>
        <fullName>Cytochrome c oxidase polypeptide Va</fullName>
    </alternativeName>
</protein>
<organism>
    <name type="scientific">Pan troglodytes</name>
    <name type="common">Chimpanzee</name>
    <dbReference type="NCBI Taxonomy" id="9598"/>
    <lineage>
        <taxon>Eukaryota</taxon>
        <taxon>Metazoa</taxon>
        <taxon>Chordata</taxon>
        <taxon>Craniata</taxon>
        <taxon>Vertebrata</taxon>
        <taxon>Euteleostomi</taxon>
        <taxon>Mammalia</taxon>
        <taxon>Eutheria</taxon>
        <taxon>Euarchontoglires</taxon>
        <taxon>Primates</taxon>
        <taxon>Haplorrhini</taxon>
        <taxon>Catarrhini</taxon>
        <taxon>Hominidae</taxon>
        <taxon>Pan</taxon>
    </lineage>
</organism>
<evidence type="ECO:0000250" key="1">
    <source>
        <dbReference type="UniProtKB" id="P00426"/>
    </source>
</evidence>
<evidence type="ECO:0000250" key="2">
    <source>
        <dbReference type="UniProtKB" id="P00427"/>
    </source>
</evidence>
<evidence type="ECO:0000250" key="3">
    <source>
        <dbReference type="UniProtKB" id="P12787"/>
    </source>
</evidence>
<evidence type="ECO:0000250" key="4">
    <source>
        <dbReference type="UniProtKB" id="P20674"/>
    </source>
</evidence>
<evidence type="ECO:0000305" key="5"/>
<dbReference type="EMBL" id="DQ987238">
    <property type="protein sequence ID" value="ABK92285.1"/>
    <property type="molecule type" value="mRNA"/>
</dbReference>
<dbReference type="RefSeq" id="NP_001112385.1">
    <property type="nucleotide sequence ID" value="NM_001118913.1"/>
</dbReference>
<dbReference type="RefSeq" id="XP_009427812.1">
    <property type="nucleotide sequence ID" value="XM_009429537.2"/>
</dbReference>
<dbReference type="SMR" id="B0VYX1"/>
<dbReference type="FunCoup" id="B0VYX1">
    <property type="interactions" value="1368"/>
</dbReference>
<dbReference type="STRING" id="9598.ENSPTRP00000063364"/>
<dbReference type="PaxDb" id="9598-ENSPTRP00000012474"/>
<dbReference type="Ensembl" id="ENSPTRT00000013458.5">
    <property type="protein sequence ID" value="ENSPTRP00000012474.4"/>
    <property type="gene ID" value="ENSPTRG00000007289.5"/>
</dbReference>
<dbReference type="GeneID" id="453750"/>
<dbReference type="KEGG" id="ptr:453750"/>
<dbReference type="CTD" id="9377"/>
<dbReference type="VGNC" id="VGNC:3562">
    <property type="gene designation" value="COX5A"/>
</dbReference>
<dbReference type="eggNOG" id="KOG4077">
    <property type="taxonomic scope" value="Eukaryota"/>
</dbReference>
<dbReference type="GeneTree" id="ENSGT00390000001424"/>
<dbReference type="HOGENOM" id="CLU_099086_1_1_1"/>
<dbReference type="InParanoid" id="B0VYX1"/>
<dbReference type="OMA" id="DPINICF"/>
<dbReference type="OrthoDB" id="16526at9604"/>
<dbReference type="TreeFam" id="TF105062"/>
<dbReference type="UniPathway" id="UPA00705"/>
<dbReference type="Proteomes" id="UP000002277">
    <property type="component" value="Chromosome 15"/>
</dbReference>
<dbReference type="Bgee" id="ENSPTRG00000007289">
    <property type="expression patterns" value="Expressed in heart and 21 other cell types or tissues"/>
</dbReference>
<dbReference type="GO" id="GO:0005743">
    <property type="term" value="C:mitochondrial inner membrane"/>
    <property type="evidence" value="ECO:0007669"/>
    <property type="project" value="UniProtKB-SubCell"/>
</dbReference>
<dbReference type="GO" id="GO:0045277">
    <property type="term" value="C:respiratory chain complex IV"/>
    <property type="evidence" value="ECO:0000318"/>
    <property type="project" value="GO_Central"/>
</dbReference>
<dbReference type="GO" id="GO:0046872">
    <property type="term" value="F:metal ion binding"/>
    <property type="evidence" value="ECO:0007669"/>
    <property type="project" value="UniProtKB-KW"/>
</dbReference>
<dbReference type="GO" id="GO:0006123">
    <property type="term" value="P:mitochondrial electron transport, cytochrome c to oxygen"/>
    <property type="evidence" value="ECO:0000318"/>
    <property type="project" value="GO_Central"/>
</dbReference>
<dbReference type="CDD" id="cd00923">
    <property type="entry name" value="Cyt_c_Oxidase_Va"/>
    <property type="match status" value="1"/>
</dbReference>
<dbReference type="FunFam" id="1.25.40.40:FF:000002">
    <property type="entry name" value="cytochrome c oxidase subunit 5A, mitochondrial"/>
    <property type="match status" value="1"/>
</dbReference>
<dbReference type="Gene3D" id="1.25.40.40">
    <property type="entry name" value="Cytochrome c oxidase, subunit Va/VI"/>
    <property type="match status" value="1"/>
</dbReference>
<dbReference type="InterPro" id="IPR003204">
    <property type="entry name" value="Cyt_c_oxidase_su5A/6"/>
</dbReference>
<dbReference type="InterPro" id="IPR036545">
    <property type="entry name" value="Cyt_c_oxidase_su5A/6_sf"/>
</dbReference>
<dbReference type="PANTHER" id="PTHR14200">
    <property type="entry name" value="CYTOCHROME C OXIDASE POLYPEPTIDE"/>
    <property type="match status" value="1"/>
</dbReference>
<dbReference type="PANTHER" id="PTHR14200:SF16">
    <property type="entry name" value="CYTOCHROME C OXIDASE SUBUNIT 5A, MITOCHONDRIAL"/>
    <property type="match status" value="1"/>
</dbReference>
<dbReference type="Pfam" id="PF02284">
    <property type="entry name" value="COX5A"/>
    <property type="match status" value="1"/>
</dbReference>
<dbReference type="SUPFAM" id="SSF48479">
    <property type="entry name" value="Cytochrome c oxidase subunit E"/>
    <property type="match status" value="1"/>
</dbReference>
<reference key="1">
    <citation type="journal article" date="2008" name="BMC Evol. Biol.">
        <title>Molecular evolution of the cytochrome c oxidase subunit 5A gene in primates.</title>
        <authorList>
            <person name="Uddin M."/>
            <person name="Opazo J.C."/>
            <person name="Wildman D.E."/>
            <person name="Sherwood C.C."/>
            <person name="Hof P.R."/>
            <person name="Goodman M."/>
            <person name="Grossman L.I."/>
        </authorList>
    </citation>
    <scope>NUCLEOTIDE SEQUENCE [MRNA]</scope>
</reference>
<name>COX5A_PANTR</name>
<proteinExistence type="evidence at transcript level"/>
<sequence>MLGAALRRCAVAATTRAGPRGLLHSARTPGPAAAIQSVRCYSHGSQETDEEFDARWVTYFNKPDIDAWELRKGINTLVTYDMVPEPKIIDAALRACRRLNDFASTVRILEAVKDKAGPHKEIYPYVIQELRPTLNELGISTPEELGLDKV</sequence>